<gene>
    <name evidence="2" type="primary">gyrB</name>
    <name type="ordered locus">SAR0005</name>
</gene>
<name>GYRB_STAAR</name>
<dbReference type="EC" id="5.6.2.2" evidence="2"/>
<dbReference type="EMBL" id="BX571856">
    <property type="protein sequence ID" value="CAG39033.1"/>
    <property type="status" value="ALT_INIT"/>
    <property type="molecule type" value="Genomic_DNA"/>
</dbReference>
<dbReference type="RefSeq" id="WP_000255583.1">
    <property type="nucleotide sequence ID" value="NC_002952.2"/>
</dbReference>
<dbReference type="PDB" id="4P8O">
    <property type="method" value="X-ray"/>
    <property type="resolution" value="2.40 A"/>
    <property type="chains" value="A/B=23-231"/>
</dbReference>
<dbReference type="PDBsum" id="4P8O"/>
<dbReference type="SMR" id="Q6GKU0"/>
<dbReference type="KEGG" id="sar:SAR0005"/>
<dbReference type="HOGENOM" id="CLU_006146_1_2_9"/>
<dbReference type="EvolutionaryTrace" id="Q6GKU0"/>
<dbReference type="Proteomes" id="UP000000596">
    <property type="component" value="Chromosome"/>
</dbReference>
<dbReference type="GO" id="GO:0005694">
    <property type="term" value="C:chromosome"/>
    <property type="evidence" value="ECO:0007669"/>
    <property type="project" value="InterPro"/>
</dbReference>
<dbReference type="GO" id="GO:0005737">
    <property type="term" value="C:cytoplasm"/>
    <property type="evidence" value="ECO:0007669"/>
    <property type="project" value="UniProtKB-SubCell"/>
</dbReference>
<dbReference type="GO" id="GO:0005524">
    <property type="term" value="F:ATP binding"/>
    <property type="evidence" value="ECO:0007669"/>
    <property type="project" value="UniProtKB-UniRule"/>
</dbReference>
<dbReference type="GO" id="GO:0003677">
    <property type="term" value="F:DNA binding"/>
    <property type="evidence" value="ECO:0007669"/>
    <property type="project" value="UniProtKB-KW"/>
</dbReference>
<dbReference type="GO" id="GO:0034335">
    <property type="term" value="F:DNA negative supercoiling activity"/>
    <property type="evidence" value="ECO:0007669"/>
    <property type="project" value="UniProtKB-ARBA"/>
</dbReference>
<dbReference type="GO" id="GO:0046872">
    <property type="term" value="F:metal ion binding"/>
    <property type="evidence" value="ECO:0007669"/>
    <property type="project" value="UniProtKB-KW"/>
</dbReference>
<dbReference type="GO" id="GO:0006265">
    <property type="term" value="P:DNA topological change"/>
    <property type="evidence" value="ECO:0007669"/>
    <property type="project" value="UniProtKB-UniRule"/>
</dbReference>
<dbReference type="GO" id="GO:0006261">
    <property type="term" value="P:DNA-templated DNA replication"/>
    <property type="evidence" value="ECO:0007669"/>
    <property type="project" value="UniProtKB-UniRule"/>
</dbReference>
<dbReference type="CDD" id="cd16928">
    <property type="entry name" value="HATPase_GyrB-like"/>
    <property type="match status" value="1"/>
</dbReference>
<dbReference type="CDD" id="cd00822">
    <property type="entry name" value="TopoII_Trans_DNA_gyrase"/>
    <property type="match status" value="1"/>
</dbReference>
<dbReference type="CDD" id="cd03366">
    <property type="entry name" value="TOPRIM_TopoIIA_GyrB"/>
    <property type="match status" value="1"/>
</dbReference>
<dbReference type="FunFam" id="3.30.230.10:FF:000005">
    <property type="entry name" value="DNA gyrase subunit B"/>
    <property type="match status" value="1"/>
</dbReference>
<dbReference type="FunFam" id="3.30.565.10:FF:000002">
    <property type="entry name" value="DNA gyrase subunit B"/>
    <property type="match status" value="1"/>
</dbReference>
<dbReference type="FunFam" id="3.40.50.670:FF:000002">
    <property type="entry name" value="DNA gyrase subunit B"/>
    <property type="match status" value="1"/>
</dbReference>
<dbReference type="Gene3D" id="3.30.230.10">
    <property type="match status" value="1"/>
</dbReference>
<dbReference type="Gene3D" id="3.40.50.670">
    <property type="match status" value="1"/>
</dbReference>
<dbReference type="Gene3D" id="3.30.565.10">
    <property type="entry name" value="Histidine kinase-like ATPase, C-terminal domain"/>
    <property type="match status" value="1"/>
</dbReference>
<dbReference type="HAMAP" id="MF_01898">
    <property type="entry name" value="GyrB"/>
    <property type="match status" value="1"/>
</dbReference>
<dbReference type="InterPro" id="IPR002288">
    <property type="entry name" value="DNA_gyrase_B_C"/>
</dbReference>
<dbReference type="InterPro" id="IPR011557">
    <property type="entry name" value="GyrB"/>
</dbReference>
<dbReference type="InterPro" id="IPR036890">
    <property type="entry name" value="HATPase_C_sf"/>
</dbReference>
<dbReference type="InterPro" id="IPR020568">
    <property type="entry name" value="Ribosomal_Su5_D2-typ_SF"/>
</dbReference>
<dbReference type="InterPro" id="IPR014721">
    <property type="entry name" value="Ribsml_uS5_D2-typ_fold_subgr"/>
</dbReference>
<dbReference type="InterPro" id="IPR001241">
    <property type="entry name" value="Topo_IIA"/>
</dbReference>
<dbReference type="InterPro" id="IPR013760">
    <property type="entry name" value="Topo_IIA-like_dom_sf"/>
</dbReference>
<dbReference type="InterPro" id="IPR000565">
    <property type="entry name" value="Topo_IIA_B"/>
</dbReference>
<dbReference type="InterPro" id="IPR013759">
    <property type="entry name" value="Topo_IIA_B_C"/>
</dbReference>
<dbReference type="InterPro" id="IPR013506">
    <property type="entry name" value="Topo_IIA_bsu_dom2"/>
</dbReference>
<dbReference type="InterPro" id="IPR018522">
    <property type="entry name" value="TopoIIA_CS"/>
</dbReference>
<dbReference type="InterPro" id="IPR006171">
    <property type="entry name" value="TOPRIM_dom"/>
</dbReference>
<dbReference type="InterPro" id="IPR034160">
    <property type="entry name" value="TOPRIM_GyrB"/>
</dbReference>
<dbReference type="NCBIfam" id="TIGR01059">
    <property type="entry name" value="gyrB"/>
    <property type="match status" value="1"/>
</dbReference>
<dbReference type="NCBIfam" id="NF004189">
    <property type="entry name" value="PRK05644.1"/>
    <property type="match status" value="1"/>
</dbReference>
<dbReference type="NCBIfam" id="NF011501">
    <property type="entry name" value="PRK14939.1"/>
    <property type="match status" value="1"/>
</dbReference>
<dbReference type="PANTHER" id="PTHR45866:SF1">
    <property type="entry name" value="DNA GYRASE SUBUNIT B, MITOCHONDRIAL"/>
    <property type="match status" value="1"/>
</dbReference>
<dbReference type="PANTHER" id="PTHR45866">
    <property type="entry name" value="DNA GYRASE/TOPOISOMERASE SUBUNIT B"/>
    <property type="match status" value="1"/>
</dbReference>
<dbReference type="Pfam" id="PF00204">
    <property type="entry name" value="DNA_gyraseB"/>
    <property type="match status" value="1"/>
</dbReference>
<dbReference type="Pfam" id="PF00986">
    <property type="entry name" value="DNA_gyraseB_C"/>
    <property type="match status" value="1"/>
</dbReference>
<dbReference type="Pfam" id="PF02518">
    <property type="entry name" value="HATPase_c"/>
    <property type="match status" value="1"/>
</dbReference>
<dbReference type="Pfam" id="PF01751">
    <property type="entry name" value="Toprim"/>
    <property type="match status" value="1"/>
</dbReference>
<dbReference type="PRINTS" id="PR01159">
    <property type="entry name" value="DNAGYRASEB"/>
</dbReference>
<dbReference type="PRINTS" id="PR00418">
    <property type="entry name" value="TPI2FAMILY"/>
</dbReference>
<dbReference type="SMART" id="SM00387">
    <property type="entry name" value="HATPase_c"/>
    <property type="match status" value="1"/>
</dbReference>
<dbReference type="SMART" id="SM00433">
    <property type="entry name" value="TOP2c"/>
    <property type="match status" value="1"/>
</dbReference>
<dbReference type="SUPFAM" id="SSF55874">
    <property type="entry name" value="ATPase domain of HSP90 chaperone/DNA topoisomerase II/histidine kinase"/>
    <property type="match status" value="1"/>
</dbReference>
<dbReference type="SUPFAM" id="SSF54211">
    <property type="entry name" value="Ribosomal protein S5 domain 2-like"/>
    <property type="match status" value="1"/>
</dbReference>
<dbReference type="SUPFAM" id="SSF56719">
    <property type="entry name" value="Type II DNA topoisomerase"/>
    <property type="match status" value="1"/>
</dbReference>
<dbReference type="PROSITE" id="PS00177">
    <property type="entry name" value="TOPOISOMERASE_II"/>
    <property type="match status" value="1"/>
</dbReference>
<dbReference type="PROSITE" id="PS50880">
    <property type="entry name" value="TOPRIM"/>
    <property type="match status" value="1"/>
</dbReference>
<proteinExistence type="evidence at protein level"/>
<evidence type="ECO:0000250" key="1"/>
<evidence type="ECO:0000255" key="2">
    <source>
        <dbReference type="HAMAP-Rule" id="MF_01898"/>
    </source>
</evidence>
<evidence type="ECO:0000305" key="3"/>
<evidence type="ECO:0007829" key="4">
    <source>
        <dbReference type="PDB" id="4P8O"/>
    </source>
</evidence>
<keyword id="KW-0002">3D-structure</keyword>
<keyword id="KW-0067">ATP-binding</keyword>
<keyword id="KW-0963">Cytoplasm</keyword>
<keyword id="KW-0238">DNA-binding</keyword>
<keyword id="KW-0413">Isomerase</keyword>
<keyword id="KW-0460">Magnesium</keyword>
<keyword id="KW-0479">Metal-binding</keyword>
<keyword id="KW-0547">Nucleotide-binding</keyword>
<keyword id="KW-0799">Topoisomerase</keyword>
<comment type="function">
    <text evidence="2">A type II topoisomerase that negatively supercoils closed circular double-stranded (ds) DNA in an ATP-dependent manner to modulate DNA topology and maintain chromosomes in an underwound state. Negative supercoiling favors strand separation, and DNA replication, transcription, recombination and repair, all of which involve strand separation. Also able to catalyze the interconversion of other topological isomers of dsDNA rings, including catenanes and knotted rings. Type II topoisomerases break and join 2 DNA strands simultaneously in an ATP-dependent manner.</text>
</comment>
<comment type="catalytic activity">
    <reaction evidence="2">
        <text>ATP-dependent breakage, passage and rejoining of double-stranded DNA.</text>
        <dbReference type="EC" id="5.6.2.2"/>
    </reaction>
</comment>
<comment type="cofactor">
    <cofactor evidence="2">
        <name>Mg(2+)</name>
        <dbReference type="ChEBI" id="CHEBI:18420"/>
    </cofactor>
    <cofactor evidence="2">
        <name>Mn(2+)</name>
        <dbReference type="ChEBI" id="CHEBI:29035"/>
    </cofactor>
    <cofactor evidence="2">
        <name>Ca(2+)</name>
        <dbReference type="ChEBI" id="CHEBI:29108"/>
    </cofactor>
    <text evidence="2">Binds two Mg(2+) per subunit. The magnesium ions form salt bridges with both the protein and the DNA. Can also accept other divalent metal cations, such as Mn(2+) or Ca(2+).</text>
</comment>
<comment type="subunit">
    <text evidence="2">Heterotetramer, composed of two GyrA and two GyrB chains. In the heterotetramer, GyrA contains the active site tyrosine that forms a transient covalent intermediate with DNA, while GyrB binds cofactors and catalyzes ATP hydrolysis.</text>
</comment>
<comment type="subcellular location">
    <subcellularLocation>
        <location evidence="2">Cytoplasm</location>
    </subcellularLocation>
</comment>
<comment type="miscellaneous">
    <text evidence="2">Few gyrases are as efficient as E.coli at forming negative supercoils. Not all organisms have 2 type II topoisomerases; in organisms with a single type II topoisomerase this enzyme also has to decatenate newly replicated chromosomes.</text>
</comment>
<comment type="similarity">
    <text evidence="2">Belongs to the type II topoisomerase GyrB family.</text>
</comment>
<comment type="sequence caution" evidence="3">
    <conflict type="erroneous initiation">
        <sequence resource="EMBL-CDS" id="CAG39033"/>
    </conflict>
    <text>Truncated N-terminus.</text>
</comment>
<reference key="1">
    <citation type="journal article" date="2004" name="Proc. Natl. Acad. Sci. U.S.A.">
        <title>Complete genomes of two clinical Staphylococcus aureus strains: evidence for the rapid evolution of virulence and drug resistance.</title>
        <authorList>
            <person name="Holden M.T.G."/>
            <person name="Feil E.J."/>
            <person name="Lindsay J.A."/>
            <person name="Peacock S.J."/>
            <person name="Day N.P.J."/>
            <person name="Enright M.C."/>
            <person name="Foster T.J."/>
            <person name="Moore C.E."/>
            <person name="Hurst L."/>
            <person name="Atkin R."/>
            <person name="Barron A."/>
            <person name="Bason N."/>
            <person name="Bentley S.D."/>
            <person name="Chillingworth C."/>
            <person name="Chillingworth T."/>
            <person name="Churcher C."/>
            <person name="Clark L."/>
            <person name="Corton C."/>
            <person name="Cronin A."/>
            <person name="Doggett J."/>
            <person name="Dowd L."/>
            <person name="Feltwell T."/>
            <person name="Hance Z."/>
            <person name="Harris B."/>
            <person name="Hauser H."/>
            <person name="Holroyd S."/>
            <person name="Jagels K."/>
            <person name="James K.D."/>
            <person name="Lennard N."/>
            <person name="Line A."/>
            <person name="Mayes R."/>
            <person name="Moule S."/>
            <person name="Mungall K."/>
            <person name="Ormond D."/>
            <person name="Quail M.A."/>
            <person name="Rabbinowitsch E."/>
            <person name="Rutherford K.M."/>
            <person name="Sanders M."/>
            <person name="Sharp S."/>
            <person name="Simmonds M."/>
            <person name="Stevens K."/>
            <person name="Whitehead S."/>
            <person name="Barrell B.G."/>
            <person name="Spratt B.G."/>
            <person name="Parkhill J."/>
        </authorList>
    </citation>
    <scope>NUCLEOTIDE SEQUENCE [LARGE SCALE GENOMIC DNA]</scope>
    <source>
        <strain>MRSA252</strain>
    </source>
</reference>
<protein>
    <recommendedName>
        <fullName evidence="2">DNA gyrase subunit B</fullName>
        <ecNumber evidence="2">5.6.2.2</ecNumber>
    </recommendedName>
</protein>
<accession>Q6GKU0</accession>
<sequence>MVTALSDVNNTDNYGAGQIQVLEGLEAVRKRPGMYIGSTSERGLHHLVWEIVDNSIDEALAGYANQIEVVIEKDNWIKVTDNGRGIPVDIQEKMGRPAVEVILTVLHAGGKFGGGGYKVSGGLHGVGSSVVNALSQDLEVYVHRNETIYHQAYKKGVPQFDLKEVGTTDKTGTVIRFKADGEIFTETTVYNYETLQQRIRELAFLNKGIQITLRDERDEENVREDSYHYEGGIKSYVELLNENKEPIHDEPIYIHQSKDDIEVEIAIQYNSGYATNLLTYANNIHTYEGGTHEDGFKRALTRVLNSYGLSSKIMKEDKDRLSGEDTREGMTAIISIKHGDPQFEGQTKTKLGNSEVRQVVDKLFSEHFERFLYENPQVARTVVEKGIMAARARVAAKKAREVTRRKSALDVASLPGKLADCSSKSPEECEIFLVEGDSAGGSTKSGRDSRTQAILPLRGKILNVEKARLDRILNNNEIRQMITAFGTGIGGDFDLAKARYHKIVIMTDADVDGAHIRTLLLTFFYRFMRPLIEAGYVYIAQPPLYKLTQGKQKYYVYNDRELDKLKSELNPTPKWSIARYKGLGEMNADQLWETTMNPEHRALLQVKLEDAIEADQTFEMLMGDVVENRRQFIEDNAVYANLDF</sequence>
<feature type="initiator methionine" description="Removed" evidence="1">
    <location>
        <position position="1"/>
    </location>
</feature>
<feature type="chain" id="PRO_0000145340" description="DNA gyrase subunit B">
    <location>
        <begin position="2"/>
        <end position="644"/>
    </location>
</feature>
<feature type="domain" description="Toprim" evidence="2">
    <location>
        <begin position="429"/>
        <end position="543"/>
    </location>
</feature>
<feature type="binding site" evidence="2">
    <location>
        <position position="435"/>
    </location>
    <ligand>
        <name>Mg(2+)</name>
        <dbReference type="ChEBI" id="CHEBI:18420"/>
        <label>1</label>
        <note>catalytic</note>
    </ligand>
</feature>
<feature type="binding site" evidence="2">
    <location>
        <position position="508"/>
    </location>
    <ligand>
        <name>Mg(2+)</name>
        <dbReference type="ChEBI" id="CHEBI:18420"/>
        <label>1</label>
        <note>catalytic</note>
    </ligand>
</feature>
<feature type="binding site" evidence="2">
    <location>
        <position position="508"/>
    </location>
    <ligand>
        <name>Mg(2+)</name>
        <dbReference type="ChEBI" id="CHEBI:18420"/>
        <label>2</label>
    </ligand>
</feature>
<feature type="binding site" evidence="2">
    <location>
        <position position="510"/>
    </location>
    <ligand>
        <name>Mg(2+)</name>
        <dbReference type="ChEBI" id="CHEBI:18420"/>
        <label>2</label>
    </ligand>
</feature>
<feature type="site" description="Interaction with DNA" evidence="2">
    <location>
        <position position="460"/>
    </location>
</feature>
<feature type="site" description="Interaction with DNA" evidence="2">
    <location>
        <position position="463"/>
    </location>
</feature>
<feature type="helix" evidence="4">
    <location>
        <begin position="26"/>
        <end position="30"/>
    </location>
</feature>
<feature type="helix" evidence="4">
    <location>
        <begin position="32"/>
        <end position="36"/>
    </location>
</feature>
<feature type="helix" evidence="4">
    <location>
        <begin position="41"/>
        <end position="60"/>
    </location>
</feature>
<feature type="strand" evidence="4">
    <location>
        <begin position="66"/>
        <end position="72"/>
    </location>
</feature>
<feature type="helix" evidence="4">
    <location>
        <begin position="73"/>
        <end position="75"/>
    </location>
</feature>
<feature type="strand" evidence="4">
    <location>
        <begin position="76"/>
        <end position="81"/>
    </location>
</feature>
<feature type="strand" evidence="4">
    <location>
        <begin position="92"/>
        <end position="97"/>
    </location>
</feature>
<feature type="helix" evidence="4">
    <location>
        <begin position="98"/>
        <end position="103"/>
    </location>
</feature>
<feature type="helix" evidence="4">
    <location>
        <begin position="130"/>
        <end position="133"/>
    </location>
</feature>
<feature type="strand" evidence="4">
    <location>
        <begin position="135"/>
        <end position="144"/>
    </location>
</feature>
<feature type="strand" evidence="4">
    <location>
        <begin position="147"/>
        <end position="154"/>
    </location>
</feature>
<feature type="strand" evidence="4">
    <location>
        <begin position="157"/>
        <end position="160"/>
    </location>
</feature>
<feature type="strand" evidence="4">
    <location>
        <begin position="163"/>
        <end position="167"/>
    </location>
</feature>
<feature type="strand" evidence="4">
    <location>
        <begin position="172"/>
        <end position="179"/>
    </location>
</feature>
<feature type="turn" evidence="4">
    <location>
        <begin position="181"/>
        <end position="183"/>
    </location>
</feature>
<feature type="helix" evidence="4">
    <location>
        <begin position="192"/>
        <end position="205"/>
    </location>
</feature>
<feature type="strand" evidence="4">
    <location>
        <begin position="210"/>
        <end position="215"/>
    </location>
</feature>
<feature type="strand" evidence="4">
    <location>
        <begin position="221"/>
        <end position="227"/>
    </location>
</feature>
<organism>
    <name type="scientific">Staphylococcus aureus (strain MRSA252)</name>
    <dbReference type="NCBI Taxonomy" id="282458"/>
    <lineage>
        <taxon>Bacteria</taxon>
        <taxon>Bacillati</taxon>
        <taxon>Bacillota</taxon>
        <taxon>Bacilli</taxon>
        <taxon>Bacillales</taxon>
        <taxon>Staphylococcaceae</taxon>
        <taxon>Staphylococcus</taxon>
    </lineage>
</organism>